<accession>Q5L4X5</accession>
<comment type="function">
    <text evidence="1">Catalyzes the reduction of the glycolytic intermediate dihydroxyacetone phosphate (DHAP) to sn-glycerol 3-phosphate (G3P), the key precursor for phospholipid synthesis.</text>
</comment>
<comment type="catalytic activity">
    <reaction evidence="1">
        <text>sn-glycerol 3-phosphate + NAD(+) = dihydroxyacetone phosphate + NADH + H(+)</text>
        <dbReference type="Rhea" id="RHEA:11092"/>
        <dbReference type="ChEBI" id="CHEBI:15378"/>
        <dbReference type="ChEBI" id="CHEBI:57540"/>
        <dbReference type="ChEBI" id="CHEBI:57597"/>
        <dbReference type="ChEBI" id="CHEBI:57642"/>
        <dbReference type="ChEBI" id="CHEBI:57945"/>
        <dbReference type="EC" id="1.1.1.94"/>
    </reaction>
    <physiologicalReaction direction="right-to-left" evidence="1">
        <dbReference type="Rhea" id="RHEA:11094"/>
    </physiologicalReaction>
</comment>
<comment type="catalytic activity">
    <reaction evidence="1">
        <text>sn-glycerol 3-phosphate + NADP(+) = dihydroxyacetone phosphate + NADPH + H(+)</text>
        <dbReference type="Rhea" id="RHEA:11096"/>
        <dbReference type="ChEBI" id="CHEBI:15378"/>
        <dbReference type="ChEBI" id="CHEBI:57597"/>
        <dbReference type="ChEBI" id="CHEBI:57642"/>
        <dbReference type="ChEBI" id="CHEBI:57783"/>
        <dbReference type="ChEBI" id="CHEBI:58349"/>
        <dbReference type="EC" id="1.1.1.94"/>
    </reaction>
    <physiologicalReaction direction="right-to-left" evidence="1">
        <dbReference type="Rhea" id="RHEA:11098"/>
    </physiologicalReaction>
</comment>
<comment type="pathway">
    <text evidence="1">Membrane lipid metabolism; glycerophospholipid metabolism.</text>
</comment>
<comment type="subcellular location">
    <subcellularLocation>
        <location evidence="1">Cytoplasm</location>
    </subcellularLocation>
</comment>
<comment type="similarity">
    <text evidence="1">Belongs to the NAD-dependent glycerol-3-phosphate dehydrogenase family.</text>
</comment>
<feature type="chain" id="PRO_0000255296" description="Glycerol-3-phosphate dehydrogenase [NAD(P)+]">
    <location>
        <begin position="1"/>
        <end position="334"/>
    </location>
</feature>
<feature type="active site" description="Proton acceptor" evidence="1">
    <location>
        <position position="192"/>
    </location>
</feature>
<feature type="binding site" evidence="1">
    <location>
        <position position="13"/>
    </location>
    <ligand>
        <name>NADPH</name>
        <dbReference type="ChEBI" id="CHEBI:57783"/>
    </ligand>
</feature>
<feature type="binding site" evidence="1">
    <location>
        <position position="33"/>
    </location>
    <ligand>
        <name>NADPH</name>
        <dbReference type="ChEBI" id="CHEBI:57783"/>
    </ligand>
</feature>
<feature type="binding site" evidence="1">
    <location>
        <position position="106"/>
    </location>
    <ligand>
        <name>NADPH</name>
        <dbReference type="ChEBI" id="CHEBI:57783"/>
    </ligand>
</feature>
<feature type="binding site" evidence="1">
    <location>
        <position position="106"/>
    </location>
    <ligand>
        <name>sn-glycerol 3-phosphate</name>
        <dbReference type="ChEBI" id="CHEBI:57597"/>
    </ligand>
</feature>
<feature type="binding site" evidence="1">
    <location>
        <position position="137"/>
    </location>
    <ligand>
        <name>sn-glycerol 3-phosphate</name>
        <dbReference type="ChEBI" id="CHEBI:57597"/>
    </ligand>
</feature>
<feature type="binding site" evidence="1">
    <location>
        <position position="139"/>
    </location>
    <ligand>
        <name>sn-glycerol 3-phosphate</name>
        <dbReference type="ChEBI" id="CHEBI:57597"/>
    </ligand>
</feature>
<feature type="binding site" evidence="1">
    <location>
        <position position="141"/>
    </location>
    <ligand>
        <name>NADPH</name>
        <dbReference type="ChEBI" id="CHEBI:57783"/>
    </ligand>
</feature>
<feature type="binding site" evidence="1">
    <location>
        <position position="192"/>
    </location>
    <ligand>
        <name>sn-glycerol 3-phosphate</name>
        <dbReference type="ChEBI" id="CHEBI:57597"/>
    </ligand>
</feature>
<feature type="binding site" evidence="1">
    <location>
        <position position="245"/>
    </location>
    <ligand>
        <name>sn-glycerol 3-phosphate</name>
        <dbReference type="ChEBI" id="CHEBI:57597"/>
    </ligand>
</feature>
<feature type="binding site" evidence="1">
    <location>
        <position position="255"/>
    </location>
    <ligand>
        <name>sn-glycerol 3-phosphate</name>
        <dbReference type="ChEBI" id="CHEBI:57597"/>
    </ligand>
</feature>
<feature type="binding site" evidence="1">
    <location>
        <position position="256"/>
    </location>
    <ligand>
        <name>NADPH</name>
        <dbReference type="ChEBI" id="CHEBI:57783"/>
    </ligand>
</feature>
<feature type="binding site" evidence="1">
    <location>
        <position position="256"/>
    </location>
    <ligand>
        <name>sn-glycerol 3-phosphate</name>
        <dbReference type="ChEBI" id="CHEBI:57597"/>
    </ligand>
</feature>
<feature type="binding site" evidence="1">
    <location>
        <position position="257"/>
    </location>
    <ligand>
        <name>sn-glycerol 3-phosphate</name>
        <dbReference type="ChEBI" id="CHEBI:57597"/>
    </ligand>
</feature>
<feature type="binding site" evidence="1">
    <location>
        <position position="280"/>
    </location>
    <ligand>
        <name>NADPH</name>
        <dbReference type="ChEBI" id="CHEBI:57783"/>
    </ligand>
</feature>
<feature type="binding site" evidence="1">
    <location>
        <position position="282"/>
    </location>
    <ligand>
        <name>NADPH</name>
        <dbReference type="ChEBI" id="CHEBI:57783"/>
    </ligand>
</feature>
<reference key="1">
    <citation type="journal article" date="2005" name="Genome Res.">
        <title>The Chlamydophila abortus genome sequence reveals an array of variable proteins that contribute to interspecies variation.</title>
        <authorList>
            <person name="Thomson N.R."/>
            <person name="Yeats C."/>
            <person name="Bell K."/>
            <person name="Holden M.T.G."/>
            <person name="Bentley S.D."/>
            <person name="Livingstone M."/>
            <person name="Cerdeno-Tarraga A.-M."/>
            <person name="Harris B."/>
            <person name="Doggett J."/>
            <person name="Ormond D."/>
            <person name="Mungall K."/>
            <person name="Clarke K."/>
            <person name="Feltwell T."/>
            <person name="Hance Z."/>
            <person name="Sanders M."/>
            <person name="Quail M.A."/>
            <person name="Price C."/>
            <person name="Barrell B.G."/>
            <person name="Parkhill J."/>
            <person name="Longbottom D."/>
        </authorList>
    </citation>
    <scope>NUCLEOTIDE SEQUENCE [LARGE SCALE GENOMIC DNA]</scope>
    <source>
        <strain>DSM 27085 / S26/3</strain>
    </source>
</reference>
<gene>
    <name evidence="1" type="primary">gpsA</name>
    <name type="ordered locus">CAB880</name>
</gene>
<keyword id="KW-0963">Cytoplasm</keyword>
<keyword id="KW-0444">Lipid biosynthesis</keyword>
<keyword id="KW-0443">Lipid metabolism</keyword>
<keyword id="KW-0520">NAD</keyword>
<keyword id="KW-0521">NADP</keyword>
<keyword id="KW-0547">Nucleotide-binding</keyword>
<keyword id="KW-0560">Oxidoreductase</keyword>
<keyword id="KW-0594">Phospholipid biosynthesis</keyword>
<keyword id="KW-1208">Phospholipid metabolism</keyword>
<sequence length="334" mass="36416">MKEKIAYLGMGIWGFCLASLLAHKGYRVVGWARNPELVAQLQTEHRHPQAPDMPIHPNLSFTTDMVEAVDGASMIVEAVSSAGIRPVSKQLKTITDLKVPFVITSKGIEQHTGLLLSEIVVEIFGSQASRYLGYLSGPSIAREVLKGCPCSVVISAYDPDTLKKIHHAFLTPKFRVYPNSDLKGVALGGALKNIIAIACGISDGFQFGDNAKSGLVTRGLHEIRKFATIMDCRPDTLYGLAGLGDLCTTCFSSLSRNTRFGKLIAQGFTLEQAKAEIGMVVEGAYTALSAYQIAKHHKIDMPITTGIYRVLYENLDIKEGIAALLQRNTKEEYL</sequence>
<protein>
    <recommendedName>
        <fullName evidence="1">Glycerol-3-phosphate dehydrogenase [NAD(P)+]</fullName>
        <ecNumber evidence="1">1.1.1.94</ecNumber>
    </recommendedName>
    <alternativeName>
        <fullName evidence="1">NAD(P)(+)-dependent glycerol-3-phosphate dehydrogenase</fullName>
    </alternativeName>
    <alternativeName>
        <fullName evidence="1">NAD(P)H-dependent dihydroxyacetone-phosphate reductase</fullName>
    </alternativeName>
</protein>
<dbReference type="EC" id="1.1.1.94" evidence="1"/>
<dbReference type="EMBL" id="CR848038">
    <property type="protein sequence ID" value="CAH64320.1"/>
    <property type="molecule type" value="Genomic_DNA"/>
</dbReference>
<dbReference type="RefSeq" id="WP_011097396.1">
    <property type="nucleotide sequence ID" value="NC_004552.2"/>
</dbReference>
<dbReference type="SMR" id="Q5L4X5"/>
<dbReference type="KEGG" id="cab:CAB880"/>
<dbReference type="eggNOG" id="COG0240">
    <property type="taxonomic scope" value="Bacteria"/>
</dbReference>
<dbReference type="HOGENOM" id="CLU_033449_0_2_0"/>
<dbReference type="OrthoDB" id="9812273at2"/>
<dbReference type="UniPathway" id="UPA00940"/>
<dbReference type="Proteomes" id="UP000001012">
    <property type="component" value="Chromosome"/>
</dbReference>
<dbReference type="GO" id="GO:0005829">
    <property type="term" value="C:cytosol"/>
    <property type="evidence" value="ECO:0007669"/>
    <property type="project" value="TreeGrafter"/>
</dbReference>
<dbReference type="GO" id="GO:0047952">
    <property type="term" value="F:glycerol-3-phosphate dehydrogenase [NAD(P)+] activity"/>
    <property type="evidence" value="ECO:0007669"/>
    <property type="project" value="UniProtKB-UniRule"/>
</dbReference>
<dbReference type="GO" id="GO:0051287">
    <property type="term" value="F:NAD binding"/>
    <property type="evidence" value="ECO:0007669"/>
    <property type="project" value="InterPro"/>
</dbReference>
<dbReference type="GO" id="GO:0005975">
    <property type="term" value="P:carbohydrate metabolic process"/>
    <property type="evidence" value="ECO:0007669"/>
    <property type="project" value="InterPro"/>
</dbReference>
<dbReference type="GO" id="GO:0046167">
    <property type="term" value="P:glycerol-3-phosphate biosynthetic process"/>
    <property type="evidence" value="ECO:0007669"/>
    <property type="project" value="UniProtKB-UniRule"/>
</dbReference>
<dbReference type="GO" id="GO:0046168">
    <property type="term" value="P:glycerol-3-phosphate catabolic process"/>
    <property type="evidence" value="ECO:0007669"/>
    <property type="project" value="InterPro"/>
</dbReference>
<dbReference type="GO" id="GO:0006650">
    <property type="term" value="P:glycerophospholipid metabolic process"/>
    <property type="evidence" value="ECO:0007669"/>
    <property type="project" value="UniProtKB-UniRule"/>
</dbReference>
<dbReference type="GO" id="GO:0008654">
    <property type="term" value="P:phospholipid biosynthetic process"/>
    <property type="evidence" value="ECO:0007669"/>
    <property type="project" value="UniProtKB-KW"/>
</dbReference>
<dbReference type="FunFam" id="1.10.1040.10:FF:000001">
    <property type="entry name" value="Glycerol-3-phosphate dehydrogenase [NAD(P)+]"/>
    <property type="match status" value="1"/>
</dbReference>
<dbReference type="Gene3D" id="1.10.1040.10">
    <property type="entry name" value="N-(1-d-carboxylethyl)-l-norvaline Dehydrogenase, domain 2"/>
    <property type="match status" value="1"/>
</dbReference>
<dbReference type="Gene3D" id="3.40.50.720">
    <property type="entry name" value="NAD(P)-binding Rossmann-like Domain"/>
    <property type="match status" value="1"/>
</dbReference>
<dbReference type="HAMAP" id="MF_00394">
    <property type="entry name" value="NAD_Glyc3P_dehydrog"/>
    <property type="match status" value="1"/>
</dbReference>
<dbReference type="InterPro" id="IPR008927">
    <property type="entry name" value="6-PGluconate_DH-like_C_sf"/>
</dbReference>
<dbReference type="InterPro" id="IPR013328">
    <property type="entry name" value="6PGD_dom2"/>
</dbReference>
<dbReference type="InterPro" id="IPR006168">
    <property type="entry name" value="G3P_DH_NAD-dep"/>
</dbReference>
<dbReference type="InterPro" id="IPR006109">
    <property type="entry name" value="G3P_DH_NAD-dep_C"/>
</dbReference>
<dbReference type="InterPro" id="IPR011128">
    <property type="entry name" value="G3P_DH_NAD-dep_N"/>
</dbReference>
<dbReference type="InterPro" id="IPR036291">
    <property type="entry name" value="NAD(P)-bd_dom_sf"/>
</dbReference>
<dbReference type="NCBIfam" id="NF000940">
    <property type="entry name" value="PRK00094.1-2"/>
    <property type="match status" value="1"/>
</dbReference>
<dbReference type="NCBIfam" id="NF000942">
    <property type="entry name" value="PRK00094.1-4"/>
    <property type="match status" value="1"/>
</dbReference>
<dbReference type="PANTHER" id="PTHR11728">
    <property type="entry name" value="GLYCEROL-3-PHOSPHATE DEHYDROGENASE"/>
    <property type="match status" value="1"/>
</dbReference>
<dbReference type="PANTHER" id="PTHR11728:SF1">
    <property type="entry name" value="GLYCEROL-3-PHOSPHATE DEHYDROGENASE [NAD(+)] 2, CHLOROPLASTIC"/>
    <property type="match status" value="1"/>
</dbReference>
<dbReference type="Pfam" id="PF07479">
    <property type="entry name" value="NAD_Gly3P_dh_C"/>
    <property type="match status" value="1"/>
</dbReference>
<dbReference type="Pfam" id="PF01210">
    <property type="entry name" value="NAD_Gly3P_dh_N"/>
    <property type="match status" value="1"/>
</dbReference>
<dbReference type="PIRSF" id="PIRSF000114">
    <property type="entry name" value="Glycerol-3-P_dh"/>
    <property type="match status" value="1"/>
</dbReference>
<dbReference type="PRINTS" id="PR00077">
    <property type="entry name" value="GPDHDRGNASE"/>
</dbReference>
<dbReference type="SUPFAM" id="SSF48179">
    <property type="entry name" value="6-phosphogluconate dehydrogenase C-terminal domain-like"/>
    <property type="match status" value="1"/>
</dbReference>
<dbReference type="SUPFAM" id="SSF51735">
    <property type="entry name" value="NAD(P)-binding Rossmann-fold domains"/>
    <property type="match status" value="1"/>
</dbReference>
<dbReference type="PROSITE" id="PS00957">
    <property type="entry name" value="NAD_G3PDH"/>
    <property type="match status" value="1"/>
</dbReference>
<name>GPDA_CHLAB</name>
<organism>
    <name type="scientific">Chlamydia abortus (strain DSM 27085 / S26/3)</name>
    <name type="common">Chlamydophila abortus</name>
    <dbReference type="NCBI Taxonomy" id="218497"/>
    <lineage>
        <taxon>Bacteria</taxon>
        <taxon>Pseudomonadati</taxon>
        <taxon>Chlamydiota</taxon>
        <taxon>Chlamydiia</taxon>
        <taxon>Chlamydiales</taxon>
        <taxon>Chlamydiaceae</taxon>
        <taxon>Chlamydia/Chlamydophila group</taxon>
        <taxon>Chlamydia</taxon>
    </lineage>
</organism>
<evidence type="ECO:0000255" key="1">
    <source>
        <dbReference type="HAMAP-Rule" id="MF_00394"/>
    </source>
</evidence>
<proteinExistence type="inferred from homology"/>